<name>SSRP_BURVG</name>
<gene>
    <name evidence="1" type="primary">smpB</name>
    <name type="ordered locus">Bcep1808_1905</name>
</gene>
<keyword id="KW-0963">Cytoplasm</keyword>
<keyword id="KW-0694">RNA-binding</keyword>
<sequence length="148" mass="17163">MSIIDNRKAHFDYHIEERYEAGLVLEGWEVKALRAGRGQIKEGYVVVKNAEIFLIGTHISPLPEASTHIKPDPVRTRKLLLHREEIKKLIGKVEQRGYTLVPLNFHYKGGRVKCDIALAKGKKLHDKRETEKKRDWEREKARIMRAGT</sequence>
<protein>
    <recommendedName>
        <fullName evidence="1">SsrA-binding protein</fullName>
    </recommendedName>
    <alternativeName>
        <fullName evidence="1">Small protein B</fullName>
    </alternativeName>
</protein>
<reference key="1">
    <citation type="submission" date="2007-03" db="EMBL/GenBank/DDBJ databases">
        <title>Complete sequence of chromosome 1 of Burkholderia vietnamiensis G4.</title>
        <authorList>
            <consortium name="US DOE Joint Genome Institute"/>
            <person name="Copeland A."/>
            <person name="Lucas S."/>
            <person name="Lapidus A."/>
            <person name="Barry K."/>
            <person name="Detter J.C."/>
            <person name="Glavina del Rio T."/>
            <person name="Hammon N."/>
            <person name="Israni S."/>
            <person name="Dalin E."/>
            <person name="Tice H."/>
            <person name="Pitluck S."/>
            <person name="Chain P."/>
            <person name="Malfatti S."/>
            <person name="Shin M."/>
            <person name="Vergez L."/>
            <person name="Schmutz J."/>
            <person name="Larimer F."/>
            <person name="Land M."/>
            <person name="Hauser L."/>
            <person name="Kyrpides N."/>
            <person name="Tiedje J."/>
            <person name="Richardson P."/>
        </authorList>
    </citation>
    <scope>NUCLEOTIDE SEQUENCE [LARGE SCALE GENOMIC DNA]</scope>
    <source>
        <strain>G4 / LMG 22486</strain>
    </source>
</reference>
<proteinExistence type="inferred from homology"/>
<comment type="function">
    <text evidence="1">Required for rescue of stalled ribosomes mediated by trans-translation. Binds to transfer-messenger RNA (tmRNA), required for stable association of tmRNA with ribosomes. tmRNA and SmpB together mimic tRNA shape, replacing the anticodon stem-loop with SmpB. tmRNA is encoded by the ssrA gene; the 2 termini fold to resemble tRNA(Ala) and it encodes a 'tag peptide', a short internal open reading frame. During trans-translation Ala-aminoacylated tmRNA acts like a tRNA, entering the A-site of stalled ribosomes, displacing the stalled mRNA. The ribosome then switches to translate the ORF on the tmRNA; the nascent peptide is terminated with the 'tag peptide' encoded by the tmRNA and targeted for degradation. The ribosome is freed to recommence translation, which seems to be the essential function of trans-translation.</text>
</comment>
<comment type="subcellular location">
    <subcellularLocation>
        <location evidence="1">Cytoplasm</location>
    </subcellularLocation>
    <text evidence="1">The tmRNA-SmpB complex associates with stalled 70S ribosomes.</text>
</comment>
<comment type="similarity">
    <text evidence="1">Belongs to the SmpB family.</text>
</comment>
<organism>
    <name type="scientific">Burkholderia vietnamiensis (strain G4 / LMG 22486)</name>
    <name type="common">Burkholderia cepacia (strain R1808)</name>
    <dbReference type="NCBI Taxonomy" id="269482"/>
    <lineage>
        <taxon>Bacteria</taxon>
        <taxon>Pseudomonadati</taxon>
        <taxon>Pseudomonadota</taxon>
        <taxon>Betaproteobacteria</taxon>
        <taxon>Burkholderiales</taxon>
        <taxon>Burkholderiaceae</taxon>
        <taxon>Burkholderia</taxon>
        <taxon>Burkholderia cepacia complex</taxon>
    </lineage>
</organism>
<accession>A4JF55</accession>
<feature type="chain" id="PRO_1000002021" description="SsrA-binding protein">
    <location>
        <begin position="1"/>
        <end position="148"/>
    </location>
</feature>
<feature type="region of interest" description="Disordered" evidence="2">
    <location>
        <begin position="129"/>
        <end position="148"/>
    </location>
</feature>
<feature type="compositionally biased region" description="Basic and acidic residues" evidence="2">
    <location>
        <begin position="129"/>
        <end position="142"/>
    </location>
</feature>
<dbReference type="EMBL" id="CP000614">
    <property type="protein sequence ID" value="ABO54908.1"/>
    <property type="molecule type" value="Genomic_DNA"/>
</dbReference>
<dbReference type="SMR" id="A4JF55"/>
<dbReference type="KEGG" id="bvi:Bcep1808_1905"/>
<dbReference type="eggNOG" id="COG0691">
    <property type="taxonomic scope" value="Bacteria"/>
</dbReference>
<dbReference type="HOGENOM" id="CLU_108953_3_0_4"/>
<dbReference type="Proteomes" id="UP000002287">
    <property type="component" value="Chromosome 1"/>
</dbReference>
<dbReference type="GO" id="GO:0005829">
    <property type="term" value="C:cytosol"/>
    <property type="evidence" value="ECO:0007669"/>
    <property type="project" value="TreeGrafter"/>
</dbReference>
<dbReference type="GO" id="GO:0003723">
    <property type="term" value="F:RNA binding"/>
    <property type="evidence" value="ECO:0007669"/>
    <property type="project" value="UniProtKB-UniRule"/>
</dbReference>
<dbReference type="GO" id="GO:0070929">
    <property type="term" value="P:trans-translation"/>
    <property type="evidence" value="ECO:0007669"/>
    <property type="project" value="UniProtKB-UniRule"/>
</dbReference>
<dbReference type="CDD" id="cd09294">
    <property type="entry name" value="SmpB"/>
    <property type="match status" value="1"/>
</dbReference>
<dbReference type="Gene3D" id="2.40.280.10">
    <property type="match status" value="1"/>
</dbReference>
<dbReference type="HAMAP" id="MF_00023">
    <property type="entry name" value="SmpB"/>
    <property type="match status" value="1"/>
</dbReference>
<dbReference type="InterPro" id="IPR023620">
    <property type="entry name" value="SmpB"/>
</dbReference>
<dbReference type="InterPro" id="IPR000037">
    <property type="entry name" value="SsrA-bd_prot"/>
</dbReference>
<dbReference type="InterPro" id="IPR020081">
    <property type="entry name" value="SsrA-bd_prot_CS"/>
</dbReference>
<dbReference type="NCBIfam" id="NF003843">
    <property type="entry name" value="PRK05422.1"/>
    <property type="match status" value="1"/>
</dbReference>
<dbReference type="NCBIfam" id="TIGR00086">
    <property type="entry name" value="smpB"/>
    <property type="match status" value="1"/>
</dbReference>
<dbReference type="PANTHER" id="PTHR30308:SF2">
    <property type="entry name" value="SSRA-BINDING PROTEIN"/>
    <property type="match status" value="1"/>
</dbReference>
<dbReference type="PANTHER" id="PTHR30308">
    <property type="entry name" value="TMRNA-BINDING COMPONENT OF TRANS-TRANSLATION TAGGING COMPLEX"/>
    <property type="match status" value="1"/>
</dbReference>
<dbReference type="Pfam" id="PF01668">
    <property type="entry name" value="SmpB"/>
    <property type="match status" value="1"/>
</dbReference>
<dbReference type="SUPFAM" id="SSF74982">
    <property type="entry name" value="Small protein B (SmpB)"/>
    <property type="match status" value="1"/>
</dbReference>
<dbReference type="PROSITE" id="PS01317">
    <property type="entry name" value="SSRP"/>
    <property type="match status" value="1"/>
</dbReference>
<evidence type="ECO:0000255" key="1">
    <source>
        <dbReference type="HAMAP-Rule" id="MF_00023"/>
    </source>
</evidence>
<evidence type="ECO:0000256" key="2">
    <source>
        <dbReference type="SAM" id="MobiDB-lite"/>
    </source>
</evidence>